<accession>P9WHI4</accession>
<accession>L0T9L0</accession>
<accession>O05836</accession>
<accession>P65983</accession>
<feature type="chain" id="PRO_0000428181" description="DNA repair protein RecO">
    <location>
        <begin position="1"/>
        <end position="265"/>
    </location>
</feature>
<gene>
    <name type="primary">recO</name>
    <name type="ordered locus">MT2431</name>
</gene>
<proteinExistence type="inferred from homology"/>
<dbReference type="EMBL" id="AE000516">
    <property type="protein sequence ID" value="AAK46725.1"/>
    <property type="molecule type" value="Genomic_DNA"/>
</dbReference>
<dbReference type="PIR" id="A70586">
    <property type="entry name" value="A70586"/>
</dbReference>
<dbReference type="RefSeq" id="WP_003412222.1">
    <property type="nucleotide sequence ID" value="NZ_KK341227.1"/>
</dbReference>
<dbReference type="SMR" id="P9WHI4"/>
<dbReference type="GeneID" id="45426349"/>
<dbReference type="KEGG" id="mtc:MT2431"/>
<dbReference type="PATRIC" id="fig|83331.31.peg.2619"/>
<dbReference type="HOGENOM" id="CLU_066632_1_1_11"/>
<dbReference type="Proteomes" id="UP000001020">
    <property type="component" value="Chromosome"/>
</dbReference>
<dbReference type="GO" id="GO:0043590">
    <property type="term" value="C:bacterial nucleoid"/>
    <property type="evidence" value="ECO:0007669"/>
    <property type="project" value="TreeGrafter"/>
</dbReference>
<dbReference type="GO" id="GO:0006310">
    <property type="term" value="P:DNA recombination"/>
    <property type="evidence" value="ECO:0007669"/>
    <property type="project" value="UniProtKB-UniRule"/>
</dbReference>
<dbReference type="GO" id="GO:0006302">
    <property type="term" value="P:double-strand break repair"/>
    <property type="evidence" value="ECO:0007669"/>
    <property type="project" value="TreeGrafter"/>
</dbReference>
<dbReference type="FunFam" id="1.20.1440.120:FF:000002">
    <property type="entry name" value="DNA repair protein RecO"/>
    <property type="match status" value="1"/>
</dbReference>
<dbReference type="FunFam" id="2.40.50.140:FF:000176">
    <property type="entry name" value="DNA repair protein RecO"/>
    <property type="match status" value="1"/>
</dbReference>
<dbReference type="Gene3D" id="2.40.50.140">
    <property type="entry name" value="Nucleic acid-binding proteins"/>
    <property type="match status" value="1"/>
</dbReference>
<dbReference type="Gene3D" id="1.20.1440.120">
    <property type="entry name" value="Recombination protein O, C-terminal domain"/>
    <property type="match status" value="1"/>
</dbReference>
<dbReference type="HAMAP" id="MF_00201">
    <property type="entry name" value="RecO"/>
    <property type="match status" value="1"/>
</dbReference>
<dbReference type="InterPro" id="IPR037278">
    <property type="entry name" value="ARFGAP/RecO"/>
</dbReference>
<dbReference type="InterPro" id="IPR022572">
    <property type="entry name" value="DNA_rep/recomb_RecO_N"/>
</dbReference>
<dbReference type="InterPro" id="IPR012340">
    <property type="entry name" value="NA-bd_OB-fold"/>
</dbReference>
<dbReference type="InterPro" id="IPR003717">
    <property type="entry name" value="RecO"/>
</dbReference>
<dbReference type="InterPro" id="IPR042242">
    <property type="entry name" value="RecO_C"/>
</dbReference>
<dbReference type="NCBIfam" id="TIGR00613">
    <property type="entry name" value="reco"/>
    <property type="match status" value="1"/>
</dbReference>
<dbReference type="PANTHER" id="PTHR33991">
    <property type="entry name" value="DNA REPAIR PROTEIN RECO"/>
    <property type="match status" value="1"/>
</dbReference>
<dbReference type="PANTHER" id="PTHR33991:SF1">
    <property type="entry name" value="DNA REPAIR PROTEIN RECO"/>
    <property type="match status" value="1"/>
</dbReference>
<dbReference type="Pfam" id="PF02565">
    <property type="entry name" value="RecO_C"/>
    <property type="match status" value="1"/>
</dbReference>
<dbReference type="Pfam" id="PF11967">
    <property type="entry name" value="RecO_N"/>
    <property type="match status" value="1"/>
</dbReference>
<dbReference type="SUPFAM" id="SSF57863">
    <property type="entry name" value="ArfGap/RecO-like zinc finger"/>
    <property type="match status" value="1"/>
</dbReference>
<dbReference type="SUPFAM" id="SSF50249">
    <property type="entry name" value="Nucleic acid-binding proteins"/>
    <property type="match status" value="1"/>
</dbReference>
<evidence type="ECO:0000250" key="1"/>
<evidence type="ECO:0000305" key="2"/>
<comment type="function">
    <text evidence="1">Involved in DNA repair and RecF pathway recombination.</text>
</comment>
<comment type="similarity">
    <text evidence="2">Belongs to the RecO family.</text>
</comment>
<sequence>MRLYRDRAVVLRQHKLGEADRIVTLLTRDHGLVRAVAKGVRRTRSKFGARLEPFAHIEVQLHPGRNLDIVTQVVSVDAFATDIVADYGRYTCGCAILETAERLAGEERAPAPALHRLTVGALRAVADGQRPRDLLLDAYLLRAMGIAGWAPALTECARCATPGPHRAFHIATGGSVCAHCRPAGSTTPPLGVVDLMSALYDGDWEAAEAAPQSARSHVSGLVAAHLQWHLERQLKTLPLVERFYQADRSVAERRAALIGQDIAGG</sequence>
<keyword id="KW-0227">DNA damage</keyword>
<keyword id="KW-0233">DNA recombination</keyword>
<keyword id="KW-0234">DNA repair</keyword>
<keyword id="KW-1185">Reference proteome</keyword>
<organism>
    <name type="scientific">Mycobacterium tuberculosis (strain CDC 1551 / Oshkosh)</name>
    <dbReference type="NCBI Taxonomy" id="83331"/>
    <lineage>
        <taxon>Bacteria</taxon>
        <taxon>Bacillati</taxon>
        <taxon>Actinomycetota</taxon>
        <taxon>Actinomycetes</taxon>
        <taxon>Mycobacteriales</taxon>
        <taxon>Mycobacteriaceae</taxon>
        <taxon>Mycobacterium</taxon>
        <taxon>Mycobacterium tuberculosis complex</taxon>
    </lineage>
</organism>
<name>RECO_MYCTO</name>
<reference key="1">
    <citation type="journal article" date="2002" name="J. Bacteriol.">
        <title>Whole-genome comparison of Mycobacterium tuberculosis clinical and laboratory strains.</title>
        <authorList>
            <person name="Fleischmann R.D."/>
            <person name="Alland D."/>
            <person name="Eisen J.A."/>
            <person name="Carpenter L."/>
            <person name="White O."/>
            <person name="Peterson J.D."/>
            <person name="DeBoy R.T."/>
            <person name="Dodson R.J."/>
            <person name="Gwinn M.L."/>
            <person name="Haft D.H."/>
            <person name="Hickey E.K."/>
            <person name="Kolonay J.F."/>
            <person name="Nelson W.C."/>
            <person name="Umayam L.A."/>
            <person name="Ermolaeva M.D."/>
            <person name="Salzberg S.L."/>
            <person name="Delcher A."/>
            <person name="Utterback T.R."/>
            <person name="Weidman J.F."/>
            <person name="Khouri H.M."/>
            <person name="Gill J."/>
            <person name="Mikula A."/>
            <person name="Bishai W."/>
            <person name="Jacobs W.R. Jr."/>
            <person name="Venter J.C."/>
            <person name="Fraser C.M."/>
        </authorList>
    </citation>
    <scope>NUCLEOTIDE SEQUENCE [LARGE SCALE GENOMIC DNA]</scope>
    <source>
        <strain>CDC 1551 / Oshkosh</strain>
    </source>
</reference>
<protein>
    <recommendedName>
        <fullName>DNA repair protein RecO</fullName>
    </recommendedName>
    <alternativeName>
        <fullName>Recombination protein O</fullName>
    </alternativeName>
</protein>